<comment type="function">
    <text evidence="1">This protein specifically catalyzes the removal of signal peptides from prolipoproteins.</text>
</comment>
<comment type="catalytic activity">
    <reaction evidence="1">
        <text>Release of signal peptides from bacterial membrane prolipoproteins. Hydrolyzes -Xaa-Yaa-Zaa-|-(S,diacylglyceryl)Cys-, in which Xaa is hydrophobic (preferably Leu), and Yaa (Ala or Ser) and Zaa (Gly or Ala) have small, neutral side chains.</text>
        <dbReference type="EC" id="3.4.23.36"/>
    </reaction>
</comment>
<comment type="pathway">
    <text evidence="1">Protein modification; lipoprotein biosynthesis (signal peptide cleavage).</text>
</comment>
<comment type="subcellular location">
    <subcellularLocation>
        <location evidence="1">Cell inner membrane</location>
        <topology evidence="1">Multi-pass membrane protein</topology>
    </subcellularLocation>
</comment>
<comment type="similarity">
    <text evidence="1">Belongs to the peptidase A8 family.</text>
</comment>
<gene>
    <name evidence="1" type="primary">lspA</name>
    <name type="ordered locus">CC_0700</name>
</gene>
<evidence type="ECO:0000255" key="1">
    <source>
        <dbReference type="HAMAP-Rule" id="MF_00161"/>
    </source>
</evidence>
<keyword id="KW-0064">Aspartyl protease</keyword>
<keyword id="KW-0997">Cell inner membrane</keyword>
<keyword id="KW-1003">Cell membrane</keyword>
<keyword id="KW-0378">Hydrolase</keyword>
<keyword id="KW-0472">Membrane</keyword>
<keyword id="KW-0645">Protease</keyword>
<keyword id="KW-1185">Reference proteome</keyword>
<keyword id="KW-0812">Transmembrane</keyword>
<keyword id="KW-1133">Transmembrane helix</keyword>
<organism>
    <name type="scientific">Caulobacter vibrioides (strain ATCC 19089 / CIP 103742 / CB 15)</name>
    <name type="common">Caulobacter crescentus</name>
    <dbReference type="NCBI Taxonomy" id="190650"/>
    <lineage>
        <taxon>Bacteria</taxon>
        <taxon>Pseudomonadati</taxon>
        <taxon>Pseudomonadota</taxon>
        <taxon>Alphaproteobacteria</taxon>
        <taxon>Caulobacterales</taxon>
        <taxon>Caulobacteraceae</taxon>
        <taxon>Caulobacter</taxon>
    </lineage>
</organism>
<name>LSPA_CAUVC</name>
<protein>
    <recommendedName>
        <fullName evidence="1">Lipoprotein signal peptidase</fullName>
        <ecNumber evidence="1">3.4.23.36</ecNumber>
    </recommendedName>
    <alternativeName>
        <fullName evidence="1">Prolipoprotein signal peptidase</fullName>
    </alternativeName>
    <alternativeName>
        <fullName evidence="1">Signal peptidase II</fullName>
        <shortName evidence="1">SPase II</shortName>
    </alternativeName>
</protein>
<accession>Q9AAA6</accession>
<proteinExistence type="inferred from homology"/>
<reference key="1">
    <citation type="journal article" date="2001" name="Proc. Natl. Acad. Sci. U.S.A.">
        <title>Complete genome sequence of Caulobacter crescentus.</title>
        <authorList>
            <person name="Nierman W.C."/>
            <person name="Feldblyum T.V."/>
            <person name="Laub M.T."/>
            <person name="Paulsen I.T."/>
            <person name="Nelson K.E."/>
            <person name="Eisen J.A."/>
            <person name="Heidelberg J.F."/>
            <person name="Alley M.R.K."/>
            <person name="Ohta N."/>
            <person name="Maddock J.R."/>
            <person name="Potocka I."/>
            <person name="Nelson W.C."/>
            <person name="Newton A."/>
            <person name="Stephens C."/>
            <person name="Phadke N.D."/>
            <person name="Ely B."/>
            <person name="DeBoy R.T."/>
            <person name="Dodson R.J."/>
            <person name="Durkin A.S."/>
            <person name="Gwinn M.L."/>
            <person name="Haft D.H."/>
            <person name="Kolonay J.F."/>
            <person name="Smit J."/>
            <person name="Craven M.B."/>
            <person name="Khouri H.M."/>
            <person name="Shetty J."/>
            <person name="Berry K.J."/>
            <person name="Utterback T.R."/>
            <person name="Tran K."/>
            <person name="Wolf A.M."/>
            <person name="Vamathevan J.J."/>
            <person name="Ermolaeva M.D."/>
            <person name="White O."/>
            <person name="Salzberg S.L."/>
            <person name="Venter J.C."/>
            <person name="Shapiro L."/>
            <person name="Fraser C.M."/>
        </authorList>
    </citation>
    <scope>NUCLEOTIDE SEQUENCE [LARGE SCALE GENOMIC DNA]</scope>
    <source>
        <strain>ATCC 19089 / CIP 103742 / CB 15</strain>
    </source>
</reference>
<sequence length="168" mass="18354">MPSLSITRQGWIAYAIAAVTVVLDQISKLWILGLLGREPGASLPLLGPIHLTMVHNYGMSFGLLRDSDWGRWLLIGFSILVVIGLAVWVHKATRPLLAVGIGLIIGGAIGNNLIDRVIYGYVVDFIDVSRLYFPWVFNIADSGISVGVALLLLDSFLSEENKLSHQTE</sequence>
<dbReference type="EC" id="3.4.23.36" evidence="1"/>
<dbReference type="EMBL" id="AE005673">
    <property type="protein sequence ID" value="AAK22685.1"/>
    <property type="molecule type" value="Genomic_DNA"/>
</dbReference>
<dbReference type="PIR" id="A87336">
    <property type="entry name" value="A87336"/>
</dbReference>
<dbReference type="RefSeq" id="NP_419517.1">
    <property type="nucleotide sequence ID" value="NC_002696.2"/>
</dbReference>
<dbReference type="RefSeq" id="WP_010918586.1">
    <property type="nucleotide sequence ID" value="NC_002696.2"/>
</dbReference>
<dbReference type="SMR" id="Q9AAA6"/>
<dbReference type="STRING" id="190650.CC_0700"/>
<dbReference type="EnsemblBacteria" id="AAK22685">
    <property type="protein sequence ID" value="AAK22685"/>
    <property type="gene ID" value="CC_0700"/>
</dbReference>
<dbReference type="KEGG" id="ccr:CC_0700"/>
<dbReference type="PATRIC" id="fig|190650.5.peg.709"/>
<dbReference type="eggNOG" id="COG0597">
    <property type="taxonomic scope" value="Bacteria"/>
</dbReference>
<dbReference type="HOGENOM" id="CLU_083252_4_3_5"/>
<dbReference type="BioCyc" id="CAULO:CC0700-MONOMER"/>
<dbReference type="UniPathway" id="UPA00665"/>
<dbReference type="Proteomes" id="UP000001816">
    <property type="component" value="Chromosome"/>
</dbReference>
<dbReference type="GO" id="GO:0005886">
    <property type="term" value="C:plasma membrane"/>
    <property type="evidence" value="ECO:0007669"/>
    <property type="project" value="UniProtKB-SubCell"/>
</dbReference>
<dbReference type="GO" id="GO:0004190">
    <property type="term" value="F:aspartic-type endopeptidase activity"/>
    <property type="evidence" value="ECO:0007669"/>
    <property type="project" value="UniProtKB-UniRule"/>
</dbReference>
<dbReference type="GO" id="GO:0006508">
    <property type="term" value="P:proteolysis"/>
    <property type="evidence" value="ECO:0007669"/>
    <property type="project" value="UniProtKB-KW"/>
</dbReference>
<dbReference type="HAMAP" id="MF_00161">
    <property type="entry name" value="LspA"/>
    <property type="match status" value="1"/>
</dbReference>
<dbReference type="InterPro" id="IPR001872">
    <property type="entry name" value="Peptidase_A8"/>
</dbReference>
<dbReference type="NCBIfam" id="TIGR00077">
    <property type="entry name" value="lspA"/>
    <property type="match status" value="1"/>
</dbReference>
<dbReference type="PANTHER" id="PTHR33695">
    <property type="entry name" value="LIPOPROTEIN SIGNAL PEPTIDASE"/>
    <property type="match status" value="1"/>
</dbReference>
<dbReference type="PANTHER" id="PTHR33695:SF1">
    <property type="entry name" value="LIPOPROTEIN SIGNAL PEPTIDASE"/>
    <property type="match status" value="1"/>
</dbReference>
<dbReference type="Pfam" id="PF01252">
    <property type="entry name" value="Peptidase_A8"/>
    <property type="match status" value="1"/>
</dbReference>
<dbReference type="PRINTS" id="PR00781">
    <property type="entry name" value="LIPOSIGPTASE"/>
</dbReference>
<feature type="chain" id="PRO_0000289361" description="Lipoprotein signal peptidase">
    <location>
        <begin position="1"/>
        <end position="168"/>
    </location>
</feature>
<feature type="transmembrane region" description="Helical" evidence="1">
    <location>
        <begin position="15"/>
        <end position="35"/>
    </location>
</feature>
<feature type="transmembrane region" description="Helical" evidence="1">
    <location>
        <begin position="69"/>
        <end position="89"/>
    </location>
</feature>
<feature type="transmembrane region" description="Helical" evidence="1">
    <location>
        <begin position="95"/>
        <end position="115"/>
    </location>
</feature>
<feature type="transmembrane region" description="Helical" evidence="1">
    <location>
        <begin position="133"/>
        <end position="153"/>
    </location>
</feature>
<feature type="active site" evidence="1">
    <location>
        <position position="124"/>
    </location>
</feature>
<feature type="active site" evidence="1">
    <location>
        <position position="141"/>
    </location>
</feature>